<feature type="chain" id="PRO_0000212714" description="Nicotianamine synthase 1">
    <location>
        <begin position="1"/>
        <end position="332"/>
    </location>
</feature>
<protein>
    <recommendedName>
        <fullName>Nicotianamine synthase 1</fullName>
        <ecNumber>2.5.1.43</ecNumber>
    </recommendedName>
    <alternativeName>
        <fullName>S-adenosyl-L-methionine:S-adenosyl-L-methionine:S-adenosyl-methionine 3-amino-3-carboxypropyltransferase 1</fullName>
        <shortName>OsNAS1</shortName>
    </alternativeName>
</protein>
<dbReference type="EC" id="2.5.1.43"/>
<dbReference type="EMBL" id="AP008209">
    <property type="protein sequence ID" value="BAF11809.1"/>
    <property type="molecule type" value="Genomic_DNA"/>
</dbReference>
<dbReference type="EMBL" id="AP014959">
    <property type="protein sequence ID" value="BAS83822.1"/>
    <property type="molecule type" value="Genomic_DNA"/>
</dbReference>
<dbReference type="EMBL" id="AK112069">
    <property type="status" value="NOT_ANNOTATED_CDS"/>
    <property type="molecule type" value="mRNA"/>
</dbReference>
<dbReference type="RefSeq" id="XP_015630629.1">
    <property type="nucleotide sequence ID" value="XM_015775143.1"/>
</dbReference>
<dbReference type="SMR" id="Q0DSH9"/>
<dbReference type="FunCoup" id="Q0DSH9">
    <property type="interactions" value="95"/>
</dbReference>
<dbReference type="STRING" id="39947.Q0DSH9"/>
<dbReference type="PaxDb" id="39947-Q0DSH9"/>
<dbReference type="EnsemblPlants" id="Os03t0307300-01">
    <property type="protein sequence ID" value="Os03t0307300-01"/>
    <property type="gene ID" value="Os03g0307300"/>
</dbReference>
<dbReference type="Gramene" id="Os03t0307300-01">
    <property type="protein sequence ID" value="Os03t0307300-01"/>
    <property type="gene ID" value="Os03g0307300"/>
</dbReference>
<dbReference type="KEGG" id="dosa:Os03g0307300"/>
<dbReference type="eggNOG" id="ENOG502QTU6">
    <property type="taxonomic scope" value="Eukaryota"/>
</dbReference>
<dbReference type="HOGENOM" id="CLU_031919_0_0_1"/>
<dbReference type="InParanoid" id="Q0DSH9"/>
<dbReference type="OMA" id="STCCKVE"/>
<dbReference type="OrthoDB" id="586689at2759"/>
<dbReference type="BRENDA" id="2.5.1.43">
    <property type="organism ID" value="4460"/>
</dbReference>
<dbReference type="Proteomes" id="UP000000763">
    <property type="component" value="Chromosome 3"/>
</dbReference>
<dbReference type="Proteomes" id="UP000059680">
    <property type="component" value="Chromosome 3"/>
</dbReference>
<dbReference type="ExpressionAtlas" id="Q0DSH9">
    <property type="expression patterns" value="baseline and differential"/>
</dbReference>
<dbReference type="GO" id="GO:0030410">
    <property type="term" value="F:nicotianamine synthase activity"/>
    <property type="evidence" value="ECO:0007669"/>
    <property type="project" value="UniProtKB-EC"/>
</dbReference>
<dbReference type="GO" id="GO:0030418">
    <property type="term" value="P:nicotianamine biosynthetic process"/>
    <property type="evidence" value="ECO:0007669"/>
    <property type="project" value="InterPro"/>
</dbReference>
<dbReference type="Gene3D" id="3.40.50.150">
    <property type="entry name" value="Vaccinia Virus protein VP39"/>
    <property type="match status" value="1"/>
</dbReference>
<dbReference type="InterPro" id="IPR004298">
    <property type="entry name" value="Nicotian_synth"/>
</dbReference>
<dbReference type="InterPro" id="IPR029063">
    <property type="entry name" value="SAM-dependent_MTases_sf"/>
</dbReference>
<dbReference type="PANTHER" id="PTHR32266:SF10">
    <property type="entry name" value="NICOTIANAMINE SYNTHASE 2"/>
    <property type="match status" value="1"/>
</dbReference>
<dbReference type="PANTHER" id="PTHR32266">
    <property type="entry name" value="NICOTIANAMINE SYNTHASE 3"/>
    <property type="match status" value="1"/>
</dbReference>
<dbReference type="Pfam" id="PF03059">
    <property type="entry name" value="NAS"/>
    <property type="match status" value="1"/>
</dbReference>
<dbReference type="SUPFAM" id="SSF53335">
    <property type="entry name" value="S-adenosyl-L-methionine-dependent methyltransferases"/>
    <property type="match status" value="1"/>
</dbReference>
<dbReference type="PROSITE" id="PS51142">
    <property type="entry name" value="NAS"/>
    <property type="match status" value="1"/>
</dbReference>
<organism>
    <name type="scientific">Oryza sativa subsp. japonica</name>
    <name type="common">Rice</name>
    <dbReference type="NCBI Taxonomy" id="39947"/>
    <lineage>
        <taxon>Eukaryota</taxon>
        <taxon>Viridiplantae</taxon>
        <taxon>Streptophyta</taxon>
        <taxon>Embryophyta</taxon>
        <taxon>Tracheophyta</taxon>
        <taxon>Spermatophyta</taxon>
        <taxon>Magnoliopsida</taxon>
        <taxon>Liliopsida</taxon>
        <taxon>Poales</taxon>
        <taxon>Poaceae</taxon>
        <taxon>BOP clade</taxon>
        <taxon>Oryzoideae</taxon>
        <taxon>Oryzeae</taxon>
        <taxon>Oryzinae</taxon>
        <taxon>Oryza</taxon>
        <taxon>Oryza sativa</taxon>
    </lineage>
</organism>
<gene>
    <name type="primary">NAS1</name>
    <name type="ordered locus">Os03g0307300</name>
    <name type="ordered locus">LOC_Os03g19427</name>
</gene>
<keyword id="KW-1185">Reference proteome</keyword>
<keyword id="KW-0949">S-adenosyl-L-methionine</keyword>
<keyword id="KW-0808">Transferase</keyword>
<proteinExistence type="evidence at transcript level"/>
<comment type="function">
    <text evidence="1">Synthesizes nicotianamine, a polyamine that is the first intermediate in the synthesis of the phytosiderophores of the mugineic acid type found in gramineae which serve as a sensor for the physiological iron status within the plant, and/or might be involved in the transport of iron.</text>
</comment>
<comment type="catalytic activity">
    <reaction>
        <text>3 S-adenosyl-L-methionine = nicotianamine + 3 S-methyl-5'-thioadenosine + 3 H(+)</text>
        <dbReference type="Rhea" id="RHEA:16481"/>
        <dbReference type="ChEBI" id="CHEBI:15378"/>
        <dbReference type="ChEBI" id="CHEBI:17509"/>
        <dbReference type="ChEBI" id="CHEBI:58249"/>
        <dbReference type="ChEBI" id="CHEBI:59789"/>
        <dbReference type="EC" id="2.5.1.43"/>
    </reaction>
</comment>
<comment type="tissue specificity">
    <text evidence="1">Expressed in roots.</text>
</comment>
<comment type="induction">
    <text evidence="1">By iron deficiency in roots and chlorotic leaves.</text>
</comment>
<comment type="similarity">
    <text evidence="2">Belongs to the nicotianamine synthase (NAS)-like family.</text>
</comment>
<name>NAS1_ORYSJ</name>
<reference key="1">
    <citation type="journal article" date="2005" name="Nature">
        <title>The map-based sequence of the rice genome.</title>
        <authorList>
            <consortium name="International rice genome sequencing project (IRGSP)"/>
        </authorList>
    </citation>
    <scope>NUCLEOTIDE SEQUENCE [LARGE SCALE GENOMIC DNA]</scope>
    <source>
        <strain>cv. Nipponbare</strain>
    </source>
</reference>
<reference key="2">
    <citation type="journal article" date="2008" name="Nucleic Acids Res.">
        <title>The rice annotation project database (RAP-DB): 2008 update.</title>
        <authorList>
            <consortium name="The rice annotation project (RAP)"/>
        </authorList>
    </citation>
    <scope>GENOME REANNOTATION</scope>
    <source>
        <strain>cv. Nipponbare</strain>
    </source>
</reference>
<reference key="3">
    <citation type="journal article" date="2013" name="Rice">
        <title>Improvement of the Oryza sativa Nipponbare reference genome using next generation sequence and optical map data.</title>
        <authorList>
            <person name="Kawahara Y."/>
            <person name="de la Bastide M."/>
            <person name="Hamilton J.P."/>
            <person name="Kanamori H."/>
            <person name="McCombie W.R."/>
            <person name="Ouyang S."/>
            <person name="Schwartz D.C."/>
            <person name="Tanaka T."/>
            <person name="Wu J."/>
            <person name="Zhou S."/>
            <person name="Childs K.L."/>
            <person name="Davidson R.M."/>
            <person name="Lin H."/>
            <person name="Quesada-Ocampo L."/>
            <person name="Vaillancourt B."/>
            <person name="Sakai H."/>
            <person name="Lee S.S."/>
            <person name="Kim J."/>
            <person name="Numa H."/>
            <person name="Itoh T."/>
            <person name="Buell C.R."/>
            <person name="Matsumoto T."/>
        </authorList>
    </citation>
    <scope>GENOME REANNOTATION</scope>
    <source>
        <strain>cv. Nipponbare</strain>
    </source>
</reference>
<reference key="4">
    <citation type="journal article" date="2003" name="Science">
        <title>Collection, mapping, and annotation of over 28,000 cDNA clones from japonica rice.</title>
        <authorList>
            <consortium name="The rice full-length cDNA consortium"/>
        </authorList>
    </citation>
    <scope>NUCLEOTIDE SEQUENCE [LARGE SCALE MRNA]</scope>
    <source>
        <strain>cv. Nipponbare</strain>
    </source>
</reference>
<reference key="5">
    <citation type="journal article" date="2003" name="Plant J.">
        <title>Three rice nicotianamine synthase genes, OsNAS1, OsNAS2, and OsNAS3 are expressed in cells involved in long-distance transport of iron and differentially regulated by iron.</title>
        <authorList>
            <person name="Inoue H."/>
            <person name="Higuchi K."/>
            <person name="Takahashi M."/>
            <person name="Nakanishi H."/>
            <person name="Mori S."/>
            <person name="Nishizawa N.K."/>
        </authorList>
    </citation>
    <scope>FUNCTION</scope>
    <scope>TISSUE SPECIFICITY</scope>
    <scope>INDUCTION</scope>
</reference>
<evidence type="ECO:0000269" key="1">
    <source>
    </source>
</evidence>
<evidence type="ECO:0000305" key="2"/>
<sequence>MEAQNQEVAALVEKIAGLHAAISKLPSLSPSAEVDALFTDLVTACVPASPVDVAKLGPEAQAMREELIRLCSAAEGHLEAHYADMLAAFDNPLDHLARFPYYGNYVNLSKLEYDLLVRYVPGIAPTRVAFVGSGPLPFSSLVLAAHHLPDAVFDNYDRCGAANERARRLFRGADEGLGARMAFHTADVATLTGELGAYDVVFLAALVGMAAEEKAGVIAHLGAHMADGAALVVRSAHGARGFLYPIVDPEDVRRGGFDVLAVCHPEDEVINSVIVARKVGAAAAAAAARRDELADSRGVVLPVVGPPSTCCKVEASAVEKAEEFAANKELSV</sequence>
<accession>Q0DSH9</accession>
<accession>Q9SXQ7</accession>